<dbReference type="EC" id="7.6.2.10" evidence="1"/>
<dbReference type="EMBL" id="CP000026">
    <property type="protein sequence ID" value="AAV79217.1"/>
    <property type="molecule type" value="Genomic_DNA"/>
</dbReference>
<dbReference type="RefSeq" id="WP_000907834.1">
    <property type="nucleotide sequence ID" value="NC_006511.1"/>
</dbReference>
<dbReference type="SMR" id="Q5PJL1"/>
<dbReference type="KEGG" id="spt:SPA3406"/>
<dbReference type="HOGENOM" id="CLU_000604_1_1_6"/>
<dbReference type="Proteomes" id="UP000008185">
    <property type="component" value="Chromosome"/>
</dbReference>
<dbReference type="GO" id="GO:0055052">
    <property type="term" value="C:ATP-binding cassette (ABC) transporter complex, substrate-binding subunit-containing"/>
    <property type="evidence" value="ECO:0007669"/>
    <property type="project" value="TreeGrafter"/>
</dbReference>
<dbReference type="GO" id="GO:0015430">
    <property type="term" value="F:ABC-type glycerol-3-phosphate transporter activity"/>
    <property type="evidence" value="ECO:0007669"/>
    <property type="project" value="UniProtKB-EC"/>
</dbReference>
<dbReference type="GO" id="GO:0005524">
    <property type="term" value="F:ATP binding"/>
    <property type="evidence" value="ECO:0007669"/>
    <property type="project" value="UniProtKB-KW"/>
</dbReference>
<dbReference type="GO" id="GO:0016887">
    <property type="term" value="F:ATP hydrolysis activity"/>
    <property type="evidence" value="ECO:0007669"/>
    <property type="project" value="InterPro"/>
</dbReference>
<dbReference type="GO" id="GO:0008643">
    <property type="term" value="P:carbohydrate transport"/>
    <property type="evidence" value="ECO:0007669"/>
    <property type="project" value="InterPro"/>
</dbReference>
<dbReference type="GO" id="GO:0001407">
    <property type="term" value="P:glycerophosphodiester transmembrane transport"/>
    <property type="evidence" value="ECO:0007669"/>
    <property type="project" value="TreeGrafter"/>
</dbReference>
<dbReference type="CDD" id="cd03301">
    <property type="entry name" value="ABC_MalK_N"/>
    <property type="match status" value="1"/>
</dbReference>
<dbReference type="FunFam" id="3.40.50.300:FF:000042">
    <property type="entry name" value="Maltose/maltodextrin ABC transporter, ATP-binding protein"/>
    <property type="match status" value="1"/>
</dbReference>
<dbReference type="FunFam" id="2.40.50.100:FF:000032">
    <property type="entry name" value="sn-glycerol-3-phosphate import ATP-binding protein UgpC"/>
    <property type="match status" value="1"/>
</dbReference>
<dbReference type="FunFam" id="2.40.50.140:FF:000142">
    <property type="entry name" value="sn-glycerol-3-phosphate import ATP-binding protein UgpC"/>
    <property type="match status" value="1"/>
</dbReference>
<dbReference type="Gene3D" id="2.40.50.100">
    <property type="match status" value="1"/>
</dbReference>
<dbReference type="Gene3D" id="2.40.50.140">
    <property type="entry name" value="Nucleic acid-binding proteins"/>
    <property type="match status" value="1"/>
</dbReference>
<dbReference type="Gene3D" id="3.40.50.300">
    <property type="entry name" value="P-loop containing nucleotide triphosphate hydrolases"/>
    <property type="match status" value="1"/>
</dbReference>
<dbReference type="InterPro" id="IPR003593">
    <property type="entry name" value="AAA+_ATPase"/>
</dbReference>
<dbReference type="InterPro" id="IPR003439">
    <property type="entry name" value="ABC_transporter-like_ATP-bd"/>
</dbReference>
<dbReference type="InterPro" id="IPR017871">
    <property type="entry name" value="ABC_transporter-like_CS"/>
</dbReference>
<dbReference type="InterPro" id="IPR015855">
    <property type="entry name" value="ABC_transpr_MalK-like"/>
</dbReference>
<dbReference type="InterPro" id="IPR047641">
    <property type="entry name" value="ABC_transpr_MalK/UgpC-like"/>
</dbReference>
<dbReference type="InterPro" id="IPR008995">
    <property type="entry name" value="Mo/tungstate-bd_C_term_dom"/>
</dbReference>
<dbReference type="InterPro" id="IPR012340">
    <property type="entry name" value="NA-bd_OB-fold"/>
</dbReference>
<dbReference type="InterPro" id="IPR040582">
    <property type="entry name" value="OB_MalK-like"/>
</dbReference>
<dbReference type="InterPro" id="IPR027417">
    <property type="entry name" value="P-loop_NTPase"/>
</dbReference>
<dbReference type="NCBIfam" id="NF008653">
    <property type="entry name" value="PRK11650.1"/>
    <property type="match status" value="1"/>
</dbReference>
<dbReference type="PANTHER" id="PTHR43875">
    <property type="entry name" value="MALTODEXTRIN IMPORT ATP-BINDING PROTEIN MSMX"/>
    <property type="match status" value="1"/>
</dbReference>
<dbReference type="PANTHER" id="PTHR43875:SF12">
    <property type="entry name" value="SN-GLYCEROL-3-PHOSPHATE IMPORT ATP-BINDING PROTEIN UGPC"/>
    <property type="match status" value="1"/>
</dbReference>
<dbReference type="Pfam" id="PF00005">
    <property type="entry name" value="ABC_tran"/>
    <property type="match status" value="1"/>
</dbReference>
<dbReference type="Pfam" id="PF17912">
    <property type="entry name" value="OB_MalK"/>
    <property type="match status" value="1"/>
</dbReference>
<dbReference type="SMART" id="SM00382">
    <property type="entry name" value="AAA"/>
    <property type="match status" value="1"/>
</dbReference>
<dbReference type="SUPFAM" id="SSF50331">
    <property type="entry name" value="MOP-like"/>
    <property type="match status" value="1"/>
</dbReference>
<dbReference type="SUPFAM" id="SSF52540">
    <property type="entry name" value="P-loop containing nucleoside triphosphate hydrolases"/>
    <property type="match status" value="1"/>
</dbReference>
<dbReference type="PROSITE" id="PS00211">
    <property type="entry name" value="ABC_TRANSPORTER_1"/>
    <property type="match status" value="1"/>
</dbReference>
<dbReference type="PROSITE" id="PS50893">
    <property type="entry name" value="ABC_TRANSPORTER_2"/>
    <property type="match status" value="1"/>
</dbReference>
<dbReference type="PROSITE" id="PS51315">
    <property type="entry name" value="UGPC"/>
    <property type="match status" value="1"/>
</dbReference>
<protein>
    <recommendedName>
        <fullName evidence="1">sn-glycerol-3-phosphate import ATP-binding protein UgpC</fullName>
        <ecNumber evidence="1">7.6.2.10</ecNumber>
    </recommendedName>
</protein>
<gene>
    <name evidence="1" type="primary">ugpC</name>
    <name type="ordered locus">SPA3406</name>
</gene>
<feature type="chain" id="PRO_0000289779" description="sn-glycerol-3-phosphate import ATP-binding protein UgpC">
    <location>
        <begin position="1"/>
        <end position="356"/>
    </location>
</feature>
<feature type="domain" description="ABC transporter" evidence="1">
    <location>
        <begin position="4"/>
        <end position="235"/>
    </location>
</feature>
<feature type="binding site" evidence="1">
    <location>
        <begin position="37"/>
        <end position="44"/>
    </location>
    <ligand>
        <name>ATP</name>
        <dbReference type="ChEBI" id="CHEBI:30616"/>
    </ligand>
</feature>
<sequence length="356" mass="39414">MAGLKLQAVTKSWDGKTQVIQPLTLDVADGEFIVMVGPSGCGKSTLLRMVAGLERVTSGDIWIDRKRVTEMEPKDRGIAIVFQNYALYPHMSVEENMAWGLKIRGMSKAHIEERVREAARILELDGLLKRRPRELSGGQRQRVAMGRAIVREPAVFLFDEPLSNLDAKLRVQMRLELQHLHRRLRTTSLYVTHDQVEAMTLAQRVMVMNKGVAEQIGTPVEVYEKPASRFVASFIGSPAMNLLDGVISASGDRFELPGGLALPIGAGYRGHAGRKMTLGIRPEHIALSSQAEGGVPLTVDTLEILGADNLAHGRWGDQKLVVRLAHQQRPAAGSTLWLHLPEHQRHLFDGETGQRV</sequence>
<reference key="1">
    <citation type="journal article" date="2004" name="Nat. Genet.">
        <title>Comparison of genome degradation in Paratyphi A and Typhi, human-restricted serovars of Salmonella enterica that cause typhoid.</title>
        <authorList>
            <person name="McClelland M."/>
            <person name="Sanderson K.E."/>
            <person name="Clifton S.W."/>
            <person name="Latreille P."/>
            <person name="Porwollik S."/>
            <person name="Sabo A."/>
            <person name="Meyer R."/>
            <person name="Bieri T."/>
            <person name="Ozersky P."/>
            <person name="McLellan M."/>
            <person name="Harkins C.R."/>
            <person name="Wang C."/>
            <person name="Nguyen C."/>
            <person name="Berghoff A."/>
            <person name="Elliott G."/>
            <person name="Kohlberg S."/>
            <person name="Strong C."/>
            <person name="Du F."/>
            <person name="Carter J."/>
            <person name="Kremizki C."/>
            <person name="Layman D."/>
            <person name="Leonard S."/>
            <person name="Sun H."/>
            <person name="Fulton L."/>
            <person name="Nash W."/>
            <person name="Miner T."/>
            <person name="Minx P."/>
            <person name="Delehaunty K."/>
            <person name="Fronick C."/>
            <person name="Magrini V."/>
            <person name="Nhan M."/>
            <person name="Warren W."/>
            <person name="Florea L."/>
            <person name="Spieth J."/>
            <person name="Wilson R.K."/>
        </authorList>
    </citation>
    <scope>NUCLEOTIDE SEQUENCE [LARGE SCALE GENOMIC DNA]</scope>
    <source>
        <strain>ATCC 9150 / SARB42</strain>
    </source>
</reference>
<comment type="function">
    <text evidence="1">Part of the ABC transporter complex UgpBAEC involved in sn-glycerol-3-phosphate (G3P) import. Responsible for energy coupling to the transport system.</text>
</comment>
<comment type="catalytic activity">
    <reaction evidence="1">
        <text>sn-glycerol 3-phosphate(out) + ATP + H2O = sn-glycerol 3-phosphate(in) + ADP + phosphate + H(+)</text>
        <dbReference type="Rhea" id="RHEA:21668"/>
        <dbReference type="ChEBI" id="CHEBI:15377"/>
        <dbReference type="ChEBI" id="CHEBI:15378"/>
        <dbReference type="ChEBI" id="CHEBI:30616"/>
        <dbReference type="ChEBI" id="CHEBI:43474"/>
        <dbReference type="ChEBI" id="CHEBI:57597"/>
        <dbReference type="ChEBI" id="CHEBI:456216"/>
        <dbReference type="EC" id="7.6.2.10"/>
    </reaction>
</comment>
<comment type="subunit">
    <text evidence="1">The complex is composed of two ATP-binding proteins (UgpC), two transmembrane proteins (UgpA and UgpE) and a solute-binding protein (UgpB).</text>
</comment>
<comment type="subcellular location">
    <subcellularLocation>
        <location evidence="1">Cell inner membrane</location>
        <topology evidence="1">Peripheral membrane protein</topology>
    </subcellularLocation>
</comment>
<comment type="similarity">
    <text evidence="1">Belongs to the ABC transporter superfamily. sn-glycerol-3-phosphate importer (TC 3.A.1.1.3) family.</text>
</comment>
<evidence type="ECO:0000255" key="1">
    <source>
        <dbReference type="HAMAP-Rule" id="MF_01727"/>
    </source>
</evidence>
<organism>
    <name type="scientific">Salmonella paratyphi A (strain ATCC 9150 / SARB42)</name>
    <dbReference type="NCBI Taxonomy" id="295319"/>
    <lineage>
        <taxon>Bacteria</taxon>
        <taxon>Pseudomonadati</taxon>
        <taxon>Pseudomonadota</taxon>
        <taxon>Gammaproteobacteria</taxon>
        <taxon>Enterobacterales</taxon>
        <taxon>Enterobacteriaceae</taxon>
        <taxon>Salmonella</taxon>
    </lineage>
</organism>
<proteinExistence type="inferred from homology"/>
<keyword id="KW-0067">ATP-binding</keyword>
<keyword id="KW-0997">Cell inner membrane</keyword>
<keyword id="KW-1003">Cell membrane</keyword>
<keyword id="KW-0472">Membrane</keyword>
<keyword id="KW-0547">Nucleotide-binding</keyword>
<keyword id="KW-0762">Sugar transport</keyword>
<keyword id="KW-1278">Translocase</keyword>
<keyword id="KW-0813">Transport</keyword>
<accession>Q5PJL1</accession>
<name>UGPC_SALPA</name>